<keyword id="KW-0687">Ribonucleoprotein</keyword>
<keyword id="KW-0689">Ribosomal protein</keyword>
<name>RL13_SERP5</name>
<proteinExistence type="inferred from homology"/>
<accession>A8GK03</accession>
<evidence type="ECO:0000255" key="1">
    <source>
        <dbReference type="HAMAP-Rule" id="MF_01366"/>
    </source>
</evidence>
<evidence type="ECO:0000305" key="2"/>
<comment type="function">
    <text evidence="1">This protein is one of the early assembly proteins of the 50S ribosomal subunit, although it is not seen to bind rRNA by itself. It is important during the early stages of 50S assembly.</text>
</comment>
<comment type="subunit">
    <text evidence="1">Part of the 50S ribosomal subunit.</text>
</comment>
<comment type="similarity">
    <text evidence="1">Belongs to the universal ribosomal protein uL13 family.</text>
</comment>
<gene>
    <name evidence="1" type="primary">rplM</name>
    <name type="ordered locus">Spro_4349</name>
</gene>
<sequence length="142" mass="15995">MKTFTAKPESVKRDWYVVDADGKTLGRLATELARRLRGKHKAEYTPHVDTGDYIIVLNAEKVAVTGNKRTDKVYYRHTGYVGGIKQATFEEMIARNPERVIEIAVKGMLPKGPLGRAMFRKLKVYAGTEHTHAAQQPQVLDI</sequence>
<dbReference type="EMBL" id="CP000826">
    <property type="protein sequence ID" value="ABV43443.1"/>
    <property type="molecule type" value="Genomic_DNA"/>
</dbReference>
<dbReference type="SMR" id="A8GK03"/>
<dbReference type="STRING" id="399741.Spro_4349"/>
<dbReference type="KEGG" id="spe:Spro_4349"/>
<dbReference type="eggNOG" id="COG0102">
    <property type="taxonomic scope" value="Bacteria"/>
</dbReference>
<dbReference type="HOGENOM" id="CLU_082184_2_2_6"/>
<dbReference type="OrthoDB" id="9801330at2"/>
<dbReference type="GO" id="GO:0022625">
    <property type="term" value="C:cytosolic large ribosomal subunit"/>
    <property type="evidence" value="ECO:0007669"/>
    <property type="project" value="TreeGrafter"/>
</dbReference>
<dbReference type="GO" id="GO:0003729">
    <property type="term" value="F:mRNA binding"/>
    <property type="evidence" value="ECO:0007669"/>
    <property type="project" value="TreeGrafter"/>
</dbReference>
<dbReference type="GO" id="GO:0003735">
    <property type="term" value="F:structural constituent of ribosome"/>
    <property type="evidence" value="ECO:0007669"/>
    <property type="project" value="InterPro"/>
</dbReference>
<dbReference type="GO" id="GO:0017148">
    <property type="term" value="P:negative regulation of translation"/>
    <property type="evidence" value="ECO:0007669"/>
    <property type="project" value="TreeGrafter"/>
</dbReference>
<dbReference type="GO" id="GO:0006412">
    <property type="term" value="P:translation"/>
    <property type="evidence" value="ECO:0007669"/>
    <property type="project" value="UniProtKB-UniRule"/>
</dbReference>
<dbReference type="CDD" id="cd00392">
    <property type="entry name" value="Ribosomal_L13"/>
    <property type="match status" value="1"/>
</dbReference>
<dbReference type="FunFam" id="3.90.1180.10:FF:000001">
    <property type="entry name" value="50S ribosomal protein L13"/>
    <property type="match status" value="1"/>
</dbReference>
<dbReference type="Gene3D" id="3.90.1180.10">
    <property type="entry name" value="Ribosomal protein L13"/>
    <property type="match status" value="1"/>
</dbReference>
<dbReference type="HAMAP" id="MF_01366">
    <property type="entry name" value="Ribosomal_uL13"/>
    <property type="match status" value="1"/>
</dbReference>
<dbReference type="InterPro" id="IPR005822">
    <property type="entry name" value="Ribosomal_uL13"/>
</dbReference>
<dbReference type="InterPro" id="IPR005823">
    <property type="entry name" value="Ribosomal_uL13_bac-type"/>
</dbReference>
<dbReference type="InterPro" id="IPR023563">
    <property type="entry name" value="Ribosomal_uL13_CS"/>
</dbReference>
<dbReference type="InterPro" id="IPR036899">
    <property type="entry name" value="Ribosomal_uL13_sf"/>
</dbReference>
<dbReference type="NCBIfam" id="TIGR01066">
    <property type="entry name" value="rplM_bact"/>
    <property type="match status" value="1"/>
</dbReference>
<dbReference type="PANTHER" id="PTHR11545:SF2">
    <property type="entry name" value="LARGE RIBOSOMAL SUBUNIT PROTEIN UL13M"/>
    <property type="match status" value="1"/>
</dbReference>
<dbReference type="PANTHER" id="PTHR11545">
    <property type="entry name" value="RIBOSOMAL PROTEIN L13"/>
    <property type="match status" value="1"/>
</dbReference>
<dbReference type="Pfam" id="PF00572">
    <property type="entry name" value="Ribosomal_L13"/>
    <property type="match status" value="1"/>
</dbReference>
<dbReference type="PIRSF" id="PIRSF002181">
    <property type="entry name" value="Ribosomal_L13"/>
    <property type="match status" value="1"/>
</dbReference>
<dbReference type="SUPFAM" id="SSF52161">
    <property type="entry name" value="Ribosomal protein L13"/>
    <property type="match status" value="1"/>
</dbReference>
<dbReference type="PROSITE" id="PS00783">
    <property type="entry name" value="RIBOSOMAL_L13"/>
    <property type="match status" value="1"/>
</dbReference>
<protein>
    <recommendedName>
        <fullName evidence="1">Large ribosomal subunit protein uL13</fullName>
    </recommendedName>
    <alternativeName>
        <fullName evidence="2">50S ribosomal protein L13</fullName>
    </alternativeName>
</protein>
<feature type="chain" id="PRO_1000067997" description="Large ribosomal subunit protein uL13">
    <location>
        <begin position="1"/>
        <end position="142"/>
    </location>
</feature>
<organism>
    <name type="scientific">Serratia proteamaculans (strain 568)</name>
    <dbReference type="NCBI Taxonomy" id="399741"/>
    <lineage>
        <taxon>Bacteria</taxon>
        <taxon>Pseudomonadati</taxon>
        <taxon>Pseudomonadota</taxon>
        <taxon>Gammaproteobacteria</taxon>
        <taxon>Enterobacterales</taxon>
        <taxon>Yersiniaceae</taxon>
        <taxon>Serratia</taxon>
    </lineage>
</organism>
<reference key="1">
    <citation type="submission" date="2007-09" db="EMBL/GenBank/DDBJ databases">
        <title>Complete sequence of chromosome of Serratia proteamaculans 568.</title>
        <authorList>
            <consortium name="US DOE Joint Genome Institute"/>
            <person name="Copeland A."/>
            <person name="Lucas S."/>
            <person name="Lapidus A."/>
            <person name="Barry K."/>
            <person name="Glavina del Rio T."/>
            <person name="Dalin E."/>
            <person name="Tice H."/>
            <person name="Pitluck S."/>
            <person name="Chain P."/>
            <person name="Malfatti S."/>
            <person name="Shin M."/>
            <person name="Vergez L."/>
            <person name="Schmutz J."/>
            <person name="Larimer F."/>
            <person name="Land M."/>
            <person name="Hauser L."/>
            <person name="Kyrpides N."/>
            <person name="Kim E."/>
            <person name="Taghavi S."/>
            <person name="Newman L."/>
            <person name="Vangronsveld J."/>
            <person name="van der Lelie D."/>
            <person name="Richardson P."/>
        </authorList>
    </citation>
    <scope>NUCLEOTIDE SEQUENCE [LARGE SCALE GENOMIC DNA]</scope>
    <source>
        <strain>568</strain>
    </source>
</reference>